<sequence length="240" mass="26513">MASLKRSNDRKVTNYVHVTKGGNATVGIANSIGLPSGQGFSCPDATAFCAKVCYAGKLEKVRKAVSSVLLHNWELLRDADLTDTVTLLSEMMADFVKDCDKKKAPKLFRIHWDGDFFSPTYVAAWARVIRDFSDVQFWAYTRVQTAAVYLHAQKLSNLSLYFSADPDNVDVARFLEGKGINIAYVDTTFAEGKAQFPTAVRCPELNNRDFDLINAKGSACARCGLCINGRKSVLFSTTKK</sequence>
<name>VG88_BPMD2</name>
<gene>
    <name type="primary">88</name>
</gene>
<feature type="chain" id="PRO_0000164834" description="Gene 88 protein">
    <location>
        <begin position="1"/>
        <end position="240"/>
    </location>
</feature>
<proteinExistence type="predicted"/>
<organism>
    <name type="scientific">Mycobacterium phage D29</name>
    <name type="common">Mycobacteriophage D29</name>
    <dbReference type="NCBI Taxonomy" id="28369"/>
    <lineage>
        <taxon>Viruses</taxon>
        <taxon>Duplodnaviria</taxon>
        <taxon>Heunggongvirae</taxon>
        <taxon>Uroviricota</taxon>
        <taxon>Caudoviricetes</taxon>
        <taxon>Fromanvirus</taxon>
    </lineage>
</organism>
<reference key="1">
    <citation type="journal article" date="1998" name="J. Mol. Biol.">
        <title>Genome structure of mycobacteriophage D29: implications for phage evolution.</title>
        <authorList>
            <person name="Ford M.E."/>
            <person name="Sarkis G.J."/>
            <person name="Belanger A.E."/>
            <person name="Hendrix R.W."/>
            <person name="Hatfull G.F."/>
        </authorList>
    </citation>
    <scope>NUCLEOTIDE SEQUENCE [LARGE SCALE GENOMIC DNA]</scope>
</reference>
<dbReference type="EMBL" id="AF022214">
    <property type="protein sequence ID" value="AAC18518.1"/>
    <property type="molecule type" value="Genomic_DNA"/>
</dbReference>
<dbReference type="PIR" id="D72809">
    <property type="entry name" value="D72809"/>
</dbReference>
<dbReference type="RefSeq" id="NP_046894.1">
    <property type="nucleotide sequence ID" value="NC_001900.1"/>
</dbReference>
<dbReference type="GeneID" id="1261616"/>
<dbReference type="KEGG" id="vg:1261616"/>
<dbReference type="OrthoDB" id="6686at10239"/>
<dbReference type="Proteomes" id="UP000002131">
    <property type="component" value="Segment"/>
</dbReference>
<dbReference type="InterPro" id="IPR020290">
    <property type="entry name" value="Gp88"/>
</dbReference>
<dbReference type="Pfam" id="PF17338">
    <property type="entry name" value="GP88"/>
    <property type="match status" value="1"/>
</dbReference>
<organismHost>
    <name type="scientific">Mycobacterium</name>
    <dbReference type="NCBI Taxonomy" id="1763"/>
</organismHost>
<protein>
    <recommendedName>
        <fullName>Gene 88 protein</fullName>
    </recommendedName>
    <alternativeName>
        <fullName>Gp88</fullName>
    </alternativeName>
</protein>
<keyword id="KW-1185">Reference proteome</keyword>
<accession>O64269</accession>